<organism>
    <name type="scientific">Oryza sativa subsp. japonica</name>
    <name type="common">Rice</name>
    <dbReference type="NCBI Taxonomy" id="39947"/>
    <lineage>
        <taxon>Eukaryota</taxon>
        <taxon>Viridiplantae</taxon>
        <taxon>Streptophyta</taxon>
        <taxon>Embryophyta</taxon>
        <taxon>Tracheophyta</taxon>
        <taxon>Spermatophyta</taxon>
        <taxon>Magnoliopsida</taxon>
        <taxon>Liliopsida</taxon>
        <taxon>Poales</taxon>
        <taxon>Poaceae</taxon>
        <taxon>BOP clade</taxon>
        <taxon>Oryzoideae</taxon>
        <taxon>Oryzeae</taxon>
        <taxon>Oryzinae</taxon>
        <taxon>Oryza</taxon>
        <taxon>Oryza sativa</taxon>
    </lineage>
</organism>
<sequence>MGVGGGGGGGGGEAAAAVAVEGDEAGKGRRWWRVKVKLSTVAVVAWVLASAALWAGLHWRFRRAALHKAEEALVCMCEERARMLQDQFAVSVNHVHALAILVATFHYDKHPPALDQDTFAVYAARTSFERPLLSGVAYAQRVVHADRESFERQQGWIIKTMKHEPSPAQDEYAPVIYSQETISYIEGLDVMSGEEDRENILRARATGKAVLTRPFRLMSNHLGVVLTFPVYLVDLPNDTAVEDRVAATAGYLGGAFDVESLVENLLRQLAGNQELVVNVYDVTNHSNPLVMYGSEVPLGIPSPSHTYTLDFGDPLRKHQMVCRYRNKLHVSWSAITTPSGVFVICMLVGYIIYAAWSRYDNVKEDCRKMEALKKRAEAADIAKSQFLATVSHEIRTPMNGVLGMLDMLLDTELKSTQRDYAQTAQVCGKALISLINEVLDRAKIEAGKIDLESVPFDLRSILDDVISLFSSKSREKGIELAVYVSERVPEILLGDPGRFRQIITNLVGNSIKFTERGHIFVQVHLADHSNLATEAKIEPVVNGMNGHKDEAIAIPTSGSHNTLSGFEAADSRNNWENFKLLLSYEKNEMPYESDSDKVTLVVSVEDTGIGIPLHAQGRVFTPFMQADSSTSRNYGGTGIGLSISKCLVEIMGGQINFVSRPLVGSTFTFTAVLRRCDKNAISDSKTVALHPLPSSFKGLSALLVDKRPVRATVTKYHLQRLGITSEVVGTIDPTFGVLSGRNGSSLTSIGKKQPCMLLIESDSWGPQMDVSLHARLQEMKQSDRIHVLPKVFLLSAAESDKVKKIHAVDSVIPKPLKASALAACLFQALGITQPSHEKRDDSGSLHGRDGSGSLHGLLLGKNILVVDDNKVNLRVAAGTLKKYGAKVECVESGKDALSLLQVPHKFDLCLMDIQMPEMDGFEATRQIRAMEGKANEQADDSESGSEIAAKTAKWHLPILAMTADVIQATHEECTKCGMDGYVSKPFEEKQLFQAVQKFLGPCVSS</sequence>
<gene>
    <name evidence="9" type="primary">HK4</name>
    <name evidence="8" type="synonym">OHK4</name>
    <name evidence="13" type="ordered locus">Os03g0717700</name>
    <name evidence="12" type="ordered locus">LOC_Os03g50860</name>
    <name evidence="14" type="ORF">OsJ_12359</name>
</gene>
<evidence type="ECO:0000255" key="1"/>
<evidence type="ECO:0000255" key="2">
    <source>
        <dbReference type="PROSITE-ProRule" id="PRU00049"/>
    </source>
</evidence>
<evidence type="ECO:0000255" key="3">
    <source>
        <dbReference type="PROSITE-ProRule" id="PRU00107"/>
    </source>
</evidence>
<evidence type="ECO:0000255" key="4">
    <source>
        <dbReference type="PROSITE-ProRule" id="PRU00169"/>
    </source>
</evidence>
<evidence type="ECO:0000269" key="5">
    <source>
    </source>
</evidence>
<evidence type="ECO:0000269" key="6">
    <source>
    </source>
</evidence>
<evidence type="ECO:0000269" key="7">
    <source>
    </source>
</evidence>
<evidence type="ECO:0000303" key="8">
    <source>
    </source>
</evidence>
<evidence type="ECO:0000303" key="9">
    <source>
    </source>
</evidence>
<evidence type="ECO:0000303" key="10">
    <source>
    </source>
</evidence>
<evidence type="ECO:0000305" key="11"/>
<evidence type="ECO:0000312" key="12">
    <source>
        <dbReference type="EMBL" id="ABF98563.1"/>
    </source>
</evidence>
<evidence type="ECO:0000312" key="13">
    <source>
        <dbReference type="EMBL" id="BAF12997.2"/>
    </source>
</evidence>
<evidence type="ECO:0000312" key="14">
    <source>
        <dbReference type="EMBL" id="EEE59816.1"/>
    </source>
</evidence>
<keyword id="KW-1003">Cell membrane</keyword>
<keyword id="KW-0932">Cytokinin signaling pathway</keyword>
<keyword id="KW-0418">Kinase</keyword>
<keyword id="KW-0472">Membrane</keyword>
<keyword id="KW-0597">Phosphoprotein</keyword>
<keyword id="KW-1185">Reference proteome</keyword>
<keyword id="KW-0677">Repeat</keyword>
<keyword id="KW-0808">Transferase</keyword>
<keyword id="KW-0812">Transmembrane</keyword>
<keyword id="KW-1133">Transmembrane helix</keyword>
<keyword id="KW-0902">Two-component regulatory system</keyword>
<reference key="1">
    <citation type="journal article" date="2006" name="Gene">
        <title>Identification and characterization of cytokinin-signalling gene families in rice.</title>
        <authorList>
            <person name="Ito Y."/>
            <person name="Kurata N."/>
        </authorList>
    </citation>
    <scope>NUCLEOTIDE SEQUENCE [GENOMIC DNA]</scope>
    <source>
        <strain>cv. Nipponbare</strain>
    </source>
</reference>
<reference key="2">
    <citation type="journal article" date="2005" name="Genome Res.">
        <title>Sequence, annotation, and analysis of synteny between rice chromosome 3 and diverged grass species.</title>
        <authorList>
            <consortium name="The rice chromosome 3 sequencing consortium"/>
            <person name="Buell C.R."/>
            <person name="Yuan Q."/>
            <person name="Ouyang S."/>
            <person name="Liu J."/>
            <person name="Zhu W."/>
            <person name="Wang A."/>
            <person name="Maiti R."/>
            <person name="Haas B."/>
            <person name="Wortman J."/>
            <person name="Pertea M."/>
            <person name="Jones K.M."/>
            <person name="Kim M."/>
            <person name="Overton L."/>
            <person name="Tsitrin T."/>
            <person name="Fadrosh D."/>
            <person name="Bera J."/>
            <person name="Weaver B."/>
            <person name="Jin S."/>
            <person name="Johri S."/>
            <person name="Reardon M."/>
            <person name="Webb K."/>
            <person name="Hill J."/>
            <person name="Moffat K."/>
            <person name="Tallon L."/>
            <person name="Van Aken S."/>
            <person name="Lewis M."/>
            <person name="Utterback T."/>
            <person name="Feldblyum T."/>
            <person name="Zismann V."/>
            <person name="Iobst S."/>
            <person name="Hsiao J."/>
            <person name="de Vazeille A.R."/>
            <person name="Salzberg S.L."/>
            <person name="White O."/>
            <person name="Fraser C.M."/>
            <person name="Yu Y."/>
            <person name="Kim H."/>
            <person name="Rambo T."/>
            <person name="Currie J."/>
            <person name="Collura K."/>
            <person name="Kernodle-Thompson S."/>
            <person name="Wei F."/>
            <person name="Kudrna K."/>
            <person name="Ammiraju J.S.S."/>
            <person name="Luo M."/>
            <person name="Goicoechea J.L."/>
            <person name="Wing R.A."/>
            <person name="Henry D."/>
            <person name="Oates R."/>
            <person name="Palmer M."/>
            <person name="Pries G."/>
            <person name="Saski C."/>
            <person name="Simmons J."/>
            <person name="Soderlund C."/>
            <person name="Nelson W."/>
            <person name="de la Bastide M."/>
            <person name="Spiegel L."/>
            <person name="Nascimento L."/>
            <person name="Huang E."/>
            <person name="Preston R."/>
            <person name="Zutavern T."/>
            <person name="Palmer L."/>
            <person name="O'Shaughnessy A."/>
            <person name="Dike S."/>
            <person name="McCombie W.R."/>
            <person name="Minx P."/>
            <person name="Cordum H."/>
            <person name="Wilson R."/>
            <person name="Jin W."/>
            <person name="Lee H.R."/>
            <person name="Jiang J."/>
            <person name="Jackson S."/>
        </authorList>
    </citation>
    <scope>NUCLEOTIDE SEQUENCE [LARGE SCALE GENOMIC DNA]</scope>
    <source>
        <strain>cv. Nipponbare</strain>
    </source>
</reference>
<reference key="3">
    <citation type="journal article" date="2005" name="Nature">
        <title>The map-based sequence of the rice genome.</title>
        <authorList>
            <consortium name="International rice genome sequencing project (IRGSP)"/>
        </authorList>
    </citation>
    <scope>NUCLEOTIDE SEQUENCE [LARGE SCALE GENOMIC DNA]</scope>
    <source>
        <strain>cv. Nipponbare</strain>
    </source>
</reference>
<reference key="4">
    <citation type="journal article" date="2008" name="Nucleic Acids Res.">
        <title>The rice annotation project database (RAP-DB): 2008 update.</title>
        <authorList>
            <consortium name="The rice annotation project (RAP)"/>
        </authorList>
    </citation>
    <scope>GENOME REANNOTATION</scope>
    <source>
        <strain>cv. Nipponbare</strain>
    </source>
</reference>
<reference key="5">
    <citation type="journal article" date="2013" name="Rice">
        <title>Improvement of the Oryza sativa Nipponbare reference genome using next generation sequence and optical map data.</title>
        <authorList>
            <person name="Kawahara Y."/>
            <person name="de la Bastide M."/>
            <person name="Hamilton J.P."/>
            <person name="Kanamori H."/>
            <person name="McCombie W.R."/>
            <person name="Ouyang S."/>
            <person name="Schwartz D.C."/>
            <person name="Tanaka T."/>
            <person name="Wu J."/>
            <person name="Zhou S."/>
            <person name="Childs K.L."/>
            <person name="Davidson R.M."/>
            <person name="Lin H."/>
            <person name="Quesada-Ocampo L."/>
            <person name="Vaillancourt B."/>
            <person name="Sakai H."/>
            <person name="Lee S.S."/>
            <person name="Kim J."/>
            <person name="Numa H."/>
            <person name="Itoh T."/>
            <person name="Buell C.R."/>
            <person name="Matsumoto T."/>
        </authorList>
    </citation>
    <scope>GENOME REANNOTATION</scope>
    <source>
        <strain>cv. Nipponbare</strain>
    </source>
</reference>
<reference key="6">
    <citation type="journal article" date="2005" name="PLoS Biol.">
        <title>The genomes of Oryza sativa: a history of duplications.</title>
        <authorList>
            <person name="Yu J."/>
            <person name="Wang J."/>
            <person name="Lin W."/>
            <person name="Li S."/>
            <person name="Li H."/>
            <person name="Zhou J."/>
            <person name="Ni P."/>
            <person name="Dong W."/>
            <person name="Hu S."/>
            <person name="Zeng C."/>
            <person name="Zhang J."/>
            <person name="Zhang Y."/>
            <person name="Li R."/>
            <person name="Xu Z."/>
            <person name="Li S."/>
            <person name="Li X."/>
            <person name="Zheng H."/>
            <person name="Cong L."/>
            <person name="Lin L."/>
            <person name="Yin J."/>
            <person name="Geng J."/>
            <person name="Li G."/>
            <person name="Shi J."/>
            <person name="Liu J."/>
            <person name="Lv H."/>
            <person name="Li J."/>
            <person name="Wang J."/>
            <person name="Deng Y."/>
            <person name="Ran L."/>
            <person name="Shi X."/>
            <person name="Wang X."/>
            <person name="Wu Q."/>
            <person name="Li C."/>
            <person name="Ren X."/>
            <person name="Wang J."/>
            <person name="Wang X."/>
            <person name="Li D."/>
            <person name="Liu D."/>
            <person name="Zhang X."/>
            <person name="Ji Z."/>
            <person name="Zhao W."/>
            <person name="Sun Y."/>
            <person name="Zhang Z."/>
            <person name="Bao J."/>
            <person name="Han Y."/>
            <person name="Dong L."/>
            <person name="Ji J."/>
            <person name="Chen P."/>
            <person name="Wu S."/>
            <person name="Liu J."/>
            <person name="Xiao Y."/>
            <person name="Bu D."/>
            <person name="Tan J."/>
            <person name="Yang L."/>
            <person name="Ye C."/>
            <person name="Zhang J."/>
            <person name="Xu J."/>
            <person name="Zhou Y."/>
            <person name="Yu Y."/>
            <person name="Zhang B."/>
            <person name="Zhuang S."/>
            <person name="Wei H."/>
            <person name="Liu B."/>
            <person name="Lei M."/>
            <person name="Yu H."/>
            <person name="Li Y."/>
            <person name="Xu H."/>
            <person name="Wei S."/>
            <person name="He X."/>
            <person name="Fang L."/>
            <person name="Zhang Z."/>
            <person name="Zhang Y."/>
            <person name="Huang X."/>
            <person name="Su Z."/>
            <person name="Tong W."/>
            <person name="Li J."/>
            <person name="Tong Z."/>
            <person name="Li S."/>
            <person name="Ye J."/>
            <person name="Wang L."/>
            <person name="Fang L."/>
            <person name="Lei T."/>
            <person name="Chen C.-S."/>
            <person name="Chen H.-C."/>
            <person name="Xu Z."/>
            <person name="Li H."/>
            <person name="Huang H."/>
            <person name="Zhang F."/>
            <person name="Xu H."/>
            <person name="Li N."/>
            <person name="Zhao C."/>
            <person name="Li S."/>
            <person name="Dong L."/>
            <person name="Huang Y."/>
            <person name="Li L."/>
            <person name="Xi Y."/>
            <person name="Qi Q."/>
            <person name="Li W."/>
            <person name="Zhang B."/>
            <person name="Hu W."/>
            <person name="Zhang Y."/>
            <person name="Tian X."/>
            <person name="Jiao Y."/>
            <person name="Liang X."/>
            <person name="Jin J."/>
            <person name="Gao L."/>
            <person name="Zheng W."/>
            <person name="Hao B."/>
            <person name="Liu S.-M."/>
            <person name="Wang W."/>
            <person name="Yuan L."/>
            <person name="Cao M."/>
            <person name="McDermott J."/>
            <person name="Samudrala R."/>
            <person name="Wang J."/>
            <person name="Wong G.K.-S."/>
            <person name="Yang H."/>
        </authorList>
    </citation>
    <scope>NUCLEOTIDE SEQUENCE [LARGE SCALE GENOMIC DNA]</scope>
    <source>
        <strain>cv. Nipponbare</strain>
    </source>
</reference>
<reference key="7">
    <citation type="journal article" date="2006" name="Plant Physiol.">
        <title>Whole-genome analysis of Oryza sativa reveals similar architecture of two-component signaling machinery with Arabidopsis.</title>
        <authorList>
            <person name="Pareek A."/>
            <person name="Singh A."/>
            <person name="Kumar M."/>
            <person name="Kushwaha H.R."/>
            <person name="Lynn A.M."/>
            <person name="Singla-Pareek S.L."/>
        </authorList>
    </citation>
    <scope>DISRUPTION PHENOTYPE</scope>
</reference>
<reference key="8">
    <citation type="journal article" date="2007" name="Genomics">
        <title>The two-component signal system in rice (Oryza sativa L.): a genome-wide study of cytokinin signal perception and transduction.</title>
        <authorList>
            <person name="Du L."/>
            <person name="Jiao F."/>
            <person name="Chu J."/>
            <person name="Jin G."/>
            <person name="Chen M."/>
            <person name="Wu P."/>
        </authorList>
    </citation>
    <scope>INDUCTION BY CYTOKININ</scope>
</reference>
<reference key="9">
    <citation type="journal article" date="2007" name="Plant Physiol.">
        <title>Nomenclature for two-component signaling elements of rice.</title>
        <authorList>
            <person name="Schaller G.E."/>
            <person name="Doi K."/>
            <person name="Hwang I."/>
            <person name="Kieber J.J."/>
            <person name="Khurana J.P."/>
            <person name="Kurata N."/>
            <person name="Mizuno T."/>
            <person name="Pareek A."/>
            <person name="Shiu S.H."/>
            <person name="Wu P."/>
            <person name="Yip W.K."/>
        </authorList>
    </citation>
    <scope>GENE FAMILY</scope>
    <scope>NOMENCLATURE</scope>
</reference>
<reference key="10">
    <citation type="journal article" date="2012" name="Plant Cell Physiol.">
        <title>Functional identification of OsHk6 as a homotypic cytokinin receptor in rice with preferential affinity for iP.</title>
        <authorList>
            <person name="Choi J."/>
            <person name="Lee J."/>
            <person name="Kim K."/>
            <person name="Cho M."/>
            <person name="Ryu H."/>
            <person name="An G."/>
            <person name="Hwang I."/>
        </authorList>
    </citation>
    <scope>FUNCTION</scope>
    <scope>TISSUE SPECIFICITY</scope>
    <scope>INDUCTION</scope>
</reference>
<comment type="function">
    <text evidence="7">Cytokinin receptor related to bacterial two-component regulators. Functions as a histidine kinase and transmits the stress signal to a downstream MAPK cascade.</text>
</comment>
<comment type="catalytic activity">
    <reaction evidence="11">
        <text>ATP + protein L-histidine = ADP + protein N-phospho-L-histidine.</text>
        <dbReference type="EC" id="2.7.13.3"/>
    </reaction>
</comment>
<comment type="subcellular location">
    <subcellularLocation>
        <location evidence="11">Cell membrane</location>
        <topology evidence="1">Multi-pass membrane protein</topology>
    </subcellularLocation>
</comment>
<comment type="tissue specificity">
    <text evidence="7">Highly expressed in young leaves and spikelets, and at lower levels in roots, mature leaves and stems.</text>
</comment>
<comment type="induction">
    <text evidence="6 7">By isopentenyladenine (iP), cis-zeatin (cZ) and dihydrozeatin (DHZ) (PubMed:22642989). Induced by cytokinin in roots (PubMed:17408920).</text>
</comment>
<comment type="domain">
    <text evidence="11">Histidine-containing phosphotransfer domain (HPt) contains an active histidine that mediates the phosphotransfer.</text>
</comment>
<comment type="PTM">
    <text evidence="11">Activation probably requires a transfer of a phosphate group between a His in the transmitter domain and an Asp of the receiver domain.</text>
</comment>
<comment type="disruption phenotype">
    <text evidence="5">Semi-dwarf, chlorina, late heading and low fertility phenotypes.</text>
</comment>
<comment type="sequence caution" evidence="11">
    <conflict type="erroneous gene model prediction">
        <sequence resource="EMBL-CDS" id="ABF98563"/>
    </conflict>
</comment>
<comment type="sequence caution" evidence="11">
    <conflict type="erroneous gene model prediction">
        <sequence resource="EMBL-CDS" id="BAF12997"/>
    </conflict>
</comment>
<name>OHK4_ORYSJ</name>
<accession>A1A698</accession>
<accession>A0A0P0W2A8</accession>
<accession>Q0DP41</accession>
<accession>Q10DW1</accession>
<proteinExistence type="evidence at transcript level"/>
<feature type="chain" id="PRO_0000433809" description="Probable histidine kinase 4">
    <location>
        <begin position="1"/>
        <end position="1005"/>
    </location>
</feature>
<feature type="topological domain" description="Cytoplasmic" evidence="11">
    <location>
        <begin position="1"/>
        <end position="37"/>
    </location>
</feature>
<feature type="transmembrane region" description="Helical" evidence="1">
    <location>
        <begin position="38"/>
        <end position="58"/>
    </location>
</feature>
<feature type="topological domain" description="Extracellular" evidence="11">
    <location>
        <begin position="59"/>
        <end position="333"/>
    </location>
</feature>
<feature type="transmembrane region" description="Helical" evidence="1">
    <location>
        <begin position="334"/>
        <end position="354"/>
    </location>
</feature>
<feature type="topological domain" description="Cytoplasmic" evidence="11">
    <location>
        <begin position="355"/>
        <end position="1005"/>
    </location>
</feature>
<feature type="domain" description="CHASE" evidence="2">
    <location>
        <begin position="110"/>
        <end position="321"/>
    </location>
</feature>
<feature type="domain" description="Histidine kinase" evidence="3">
    <location>
        <begin position="389"/>
        <end position="675"/>
    </location>
</feature>
<feature type="domain" description="Response regulatory 1" evidence="4">
    <location>
        <begin position="700"/>
        <end position="829"/>
    </location>
</feature>
<feature type="domain" description="Response regulatory 2" evidence="4">
    <location>
        <begin position="862"/>
        <end position="999"/>
    </location>
</feature>
<feature type="modified residue" description="Phosphohistidine; by autocatalysis" evidence="3">
    <location>
        <position position="392"/>
    </location>
</feature>
<feature type="modified residue" description="4-aspartylphosphate" evidence="4">
    <location>
        <position position="912"/>
    </location>
</feature>
<protein>
    <recommendedName>
        <fullName evidence="11">Probable histidine kinase 4</fullName>
        <shortName evidence="10">OsHK4</shortName>
        <ecNumber evidence="11">2.7.13.3</ecNumber>
    </recommendedName>
    <alternativeName>
        <fullName evidence="11">OsCRL1b</fullName>
    </alternativeName>
</protein>
<dbReference type="EC" id="2.7.13.3" evidence="11"/>
<dbReference type="EMBL" id="BR000246">
    <property type="protein sequence ID" value="FAA00250.1"/>
    <property type="molecule type" value="Genomic_DNA"/>
</dbReference>
<dbReference type="EMBL" id="DP000009">
    <property type="protein sequence ID" value="ABF98563.1"/>
    <property type="status" value="ALT_SEQ"/>
    <property type="molecule type" value="Genomic_DNA"/>
</dbReference>
<dbReference type="EMBL" id="AP008209">
    <property type="protein sequence ID" value="BAF12997.2"/>
    <property type="status" value="ALT_SEQ"/>
    <property type="molecule type" value="Genomic_DNA"/>
</dbReference>
<dbReference type="EMBL" id="AP014959">
    <property type="protein sequence ID" value="BAS86088.1"/>
    <property type="molecule type" value="Genomic_DNA"/>
</dbReference>
<dbReference type="EMBL" id="CM000140">
    <property type="protein sequence ID" value="EEE59816.1"/>
    <property type="molecule type" value="Genomic_DNA"/>
</dbReference>
<dbReference type="RefSeq" id="XP_015630313.1">
    <property type="nucleotide sequence ID" value="XM_015774827.1"/>
</dbReference>
<dbReference type="SMR" id="A1A698"/>
<dbReference type="FunCoup" id="A1A698">
    <property type="interactions" value="83"/>
</dbReference>
<dbReference type="STRING" id="39947.A1A698"/>
<dbReference type="PaxDb" id="39947-A1A698"/>
<dbReference type="EnsemblPlants" id="Os03t0717700-01">
    <property type="protein sequence ID" value="Os03t0717700-01"/>
    <property type="gene ID" value="Os03g0717700"/>
</dbReference>
<dbReference type="Gramene" id="Os03t0717700-01">
    <property type="protein sequence ID" value="Os03t0717700-01"/>
    <property type="gene ID" value="Os03g0717700"/>
</dbReference>
<dbReference type="KEGG" id="dosa:Os03g0717700"/>
<dbReference type="eggNOG" id="KOG0519">
    <property type="taxonomic scope" value="Eukaryota"/>
</dbReference>
<dbReference type="HOGENOM" id="CLU_000445_16_2_1"/>
<dbReference type="InParanoid" id="A1A698"/>
<dbReference type="OMA" id="DSWGPQM"/>
<dbReference type="OrthoDB" id="303614at2759"/>
<dbReference type="Proteomes" id="UP000000763">
    <property type="component" value="Chromosome 3"/>
</dbReference>
<dbReference type="Proteomes" id="UP000007752">
    <property type="component" value="Chromosome 3"/>
</dbReference>
<dbReference type="Proteomes" id="UP000059680">
    <property type="component" value="Chromosome 3"/>
</dbReference>
<dbReference type="ExpressionAtlas" id="A1A698">
    <property type="expression patterns" value="baseline and differential"/>
</dbReference>
<dbReference type="GO" id="GO:0005634">
    <property type="term" value="C:nucleus"/>
    <property type="evidence" value="ECO:0000318"/>
    <property type="project" value="GO_Central"/>
</dbReference>
<dbReference type="GO" id="GO:0005886">
    <property type="term" value="C:plasma membrane"/>
    <property type="evidence" value="ECO:0007669"/>
    <property type="project" value="UniProtKB-SubCell"/>
</dbReference>
<dbReference type="GO" id="GO:0019955">
    <property type="term" value="F:cytokine binding"/>
    <property type="evidence" value="ECO:0000314"/>
    <property type="project" value="UniProtKB"/>
</dbReference>
<dbReference type="GO" id="GO:0000155">
    <property type="term" value="F:phosphorelay sensor kinase activity"/>
    <property type="evidence" value="ECO:0000314"/>
    <property type="project" value="UniProtKB"/>
</dbReference>
<dbReference type="GO" id="GO:0004673">
    <property type="term" value="F:protein histidine kinase activity"/>
    <property type="evidence" value="ECO:0000314"/>
    <property type="project" value="UniProtKB"/>
</dbReference>
<dbReference type="GO" id="GO:0009736">
    <property type="term" value="P:cytokinin-activated signaling pathway"/>
    <property type="evidence" value="ECO:0007669"/>
    <property type="project" value="UniProtKB-KW"/>
</dbReference>
<dbReference type="GO" id="GO:0006468">
    <property type="term" value="P:protein phosphorylation"/>
    <property type="evidence" value="ECO:0000314"/>
    <property type="project" value="UniProtKB"/>
</dbReference>
<dbReference type="CDD" id="cd16922">
    <property type="entry name" value="HATPase_EvgS-ArcB-TorS-like"/>
    <property type="match status" value="1"/>
</dbReference>
<dbReference type="CDD" id="cd00082">
    <property type="entry name" value="HisKA"/>
    <property type="match status" value="1"/>
</dbReference>
<dbReference type="CDD" id="cd17546">
    <property type="entry name" value="REC_hyHK_CKI1_RcsC-like"/>
    <property type="match status" value="1"/>
</dbReference>
<dbReference type="FunFam" id="3.40.50.2300:FF:000137">
    <property type="entry name" value="Histidine kinase 3"/>
    <property type="match status" value="1"/>
</dbReference>
<dbReference type="FunFam" id="1.10.287.130:FF:000015">
    <property type="entry name" value="Histidine kinase 4"/>
    <property type="match status" value="1"/>
</dbReference>
<dbReference type="FunFam" id="3.30.450.350:FF:000001">
    <property type="entry name" value="Histidine kinase 4"/>
    <property type="match status" value="1"/>
</dbReference>
<dbReference type="Gene3D" id="1.10.287.130">
    <property type="match status" value="1"/>
</dbReference>
<dbReference type="Gene3D" id="3.40.50.2300">
    <property type="match status" value="1"/>
</dbReference>
<dbReference type="Gene3D" id="6.10.250.1190">
    <property type="match status" value="1"/>
</dbReference>
<dbReference type="Gene3D" id="3.30.450.350">
    <property type="entry name" value="CHASE domain"/>
    <property type="match status" value="1"/>
</dbReference>
<dbReference type="Gene3D" id="3.30.565.10">
    <property type="entry name" value="Histidine kinase-like ATPase, C-terminal domain"/>
    <property type="match status" value="1"/>
</dbReference>
<dbReference type="InterPro" id="IPR050956">
    <property type="entry name" value="2C_system_His_kinase"/>
</dbReference>
<dbReference type="InterPro" id="IPR006189">
    <property type="entry name" value="CHASE_dom"/>
</dbReference>
<dbReference type="InterPro" id="IPR042240">
    <property type="entry name" value="CHASE_sf"/>
</dbReference>
<dbReference type="InterPro" id="IPR011006">
    <property type="entry name" value="CheY-like_superfamily"/>
</dbReference>
<dbReference type="InterPro" id="IPR036890">
    <property type="entry name" value="HATPase_C_sf"/>
</dbReference>
<dbReference type="InterPro" id="IPR005467">
    <property type="entry name" value="His_kinase_dom"/>
</dbReference>
<dbReference type="InterPro" id="IPR003661">
    <property type="entry name" value="HisK_dim/P_dom"/>
</dbReference>
<dbReference type="InterPro" id="IPR036097">
    <property type="entry name" value="HisK_dim/P_sf"/>
</dbReference>
<dbReference type="InterPro" id="IPR056839">
    <property type="entry name" value="Receiver_AHK4/CRE1_1st"/>
</dbReference>
<dbReference type="InterPro" id="IPR004358">
    <property type="entry name" value="Sig_transdc_His_kin-like_C"/>
</dbReference>
<dbReference type="InterPro" id="IPR001789">
    <property type="entry name" value="Sig_transdc_resp-reg_receiver"/>
</dbReference>
<dbReference type="PANTHER" id="PTHR43719:SF77">
    <property type="entry name" value="HISTIDINE KINASE 4-RELATED"/>
    <property type="match status" value="1"/>
</dbReference>
<dbReference type="PANTHER" id="PTHR43719">
    <property type="entry name" value="TWO-COMPONENT HISTIDINE KINASE"/>
    <property type="match status" value="1"/>
</dbReference>
<dbReference type="Pfam" id="PF03924">
    <property type="entry name" value="CHASE"/>
    <property type="match status" value="1"/>
</dbReference>
<dbReference type="Pfam" id="PF02518">
    <property type="entry name" value="HATPase_c"/>
    <property type="match status" value="1"/>
</dbReference>
<dbReference type="Pfam" id="PF00512">
    <property type="entry name" value="HisKA"/>
    <property type="match status" value="1"/>
</dbReference>
<dbReference type="Pfam" id="PF24896">
    <property type="entry name" value="Receiver_CRE1"/>
    <property type="match status" value="1"/>
</dbReference>
<dbReference type="Pfam" id="PF00072">
    <property type="entry name" value="Response_reg"/>
    <property type="match status" value="1"/>
</dbReference>
<dbReference type="PRINTS" id="PR00344">
    <property type="entry name" value="BCTRLSENSOR"/>
</dbReference>
<dbReference type="SMART" id="SM01079">
    <property type="entry name" value="CHASE"/>
    <property type="match status" value="1"/>
</dbReference>
<dbReference type="SMART" id="SM00387">
    <property type="entry name" value="HATPase_c"/>
    <property type="match status" value="1"/>
</dbReference>
<dbReference type="SMART" id="SM00388">
    <property type="entry name" value="HisKA"/>
    <property type="match status" value="1"/>
</dbReference>
<dbReference type="SMART" id="SM00448">
    <property type="entry name" value="REC"/>
    <property type="match status" value="1"/>
</dbReference>
<dbReference type="SUPFAM" id="SSF55874">
    <property type="entry name" value="ATPase domain of HSP90 chaperone/DNA topoisomerase II/histidine kinase"/>
    <property type="match status" value="1"/>
</dbReference>
<dbReference type="SUPFAM" id="SSF52172">
    <property type="entry name" value="CheY-like"/>
    <property type="match status" value="1"/>
</dbReference>
<dbReference type="SUPFAM" id="SSF47384">
    <property type="entry name" value="Homodimeric domain of signal transducing histidine kinase"/>
    <property type="match status" value="1"/>
</dbReference>
<dbReference type="PROSITE" id="PS50839">
    <property type="entry name" value="CHASE"/>
    <property type="match status" value="1"/>
</dbReference>
<dbReference type="PROSITE" id="PS50109">
    <property type="entry name" value="HIS_KIN"/>
    <property type="match status" value="1"/>
</dbReference>
<dbReference type="PROSITE" id="PS50110">
    <property type="entry name" value="RESPONSE_REGULATORY"/>
    <property type="match status" value="2"/>
</dbReference>